<evidence type="ECO:0000255" key="1">
    <source>
        <dbReference type="HAMAP-Rule" id="MF_00093"/>
    </source>
</evidence>
<protein>
    <recommendedName>
        <fullName evidence="1">Peptide chain release factor 1</fullName>
        <shortName evidence="1">RF-1</shortName>
    </recommendedName>
</protein>
<dbReference type="EMBL" id="AE008922">
    <property type="protein sequence ID" value="AAM40182.1"/>
    <property type="molecule type" value="Genomic_DNA"/>
</dbReference>
<dbReference type="RefSeq" id="NP_636258.1">
    <property type="nucleotide sequence ID" value="NC_003902.1"/>
</dbReference>
<dbReference type="RefSeq" id="WP_011036103.1">
    <property type="nucleotide sequence ID" value="NC_003902.1"/>
</dbReference>
<dbReference type="SMR" id="Q8PC68"/>
<dbReference type="STRING" id="190485.XCC0867"/>
<dbReference type="EnsemblBacteria" id="AAM40182">
    <property type="protein sequence ID" value="AAM40182"/>
    <property type="gene ID" value="XCC0867"/>
</dbReference>
<dbReference type="GeneID" id="58014557"/>
<dbReference type="KEGG" id="xcc:XCC0867"/>
<dbReference type="PATRIC" id="fig|190485.4.peg.943"/>
<dbReference type="eggNOG" id="COG0216">
    <property type="taxonomic scope" value="Bacteria"/>
</dbReference>
<dbReference type="HOGENOM" id="CLU_036856_0_1_6"/>
<dbReference type="OrthoDB" id="9806673at2"/>
<dbReference type="Proteomes" id="UP000001010">
    <property type="component" value="Chromosome"/>
</dbReference>
<dbReference type="GO" id="GO:0005737">
    <property type="term" value="C:cytoplasm"/>
    <property type="evidence" value="ECO:0007669"/>
    <property type="project" value="UniProtKB-SubCell"/>
</dbReference>
<dbReference type="GO" id="GO:0016149">
    <property type="term" value="F:translation release factor activity, codon specific"/>
    <property type="evidence" value="ECO:0007669"/>
    <property type="project" value="UniProtKB-UniRule"/>
</dbReference>
<dbReference type="FunFam" id="3.30.160.20:FF:000004">
    <property type="entry name" value="Peptide chain release factor 1"/>
    <property type="match status" value="1"/>
</dbReference>
<dbReference type="FunFam" id="3.30.70.1660:FF:000002">
    <property type="entry name" value="Peptide chain release factor 1"/>
    <property type="match status" value="1"/>
</dbReference>
<dbReference type="FunFam" id="3.30.70.1660:FF:000004">
    <property type="entry name" value="Peptide chain release factor 1"/>
    <property type="match status" value="1"/>
</dbReference>
<dbReference type="Gene3D" id="3.30.160.20">
    <property type="match status" value="1"/>
</dbReference>
<dbReference type="Gene3D" id="3.30.70.1660">
    <property type="match status" value="2"/>
</dbReference>
<dbReference type="Gene3D" id="6.10.140.1950">
    <property type="match status" value="1"/>
</dbReference>
<dbReference type="HAMAP" id="MF_00093">
    <property type="entry name" value="Rel_fac_1"/>
    <property type="match status" value="1"/>
</dbReference>
<dbReference type="InterPro" id="IPR005139">
    <property type="entry name" value="PCRF"/>
</dbReference>
<dbReference type="InterPro" id="IPR000352">
    <property type="entry name" value="Pep_chain_release_fac_I"/>
</dbReference>
<dbReference type="InterPro" id="IPR045853">
    <property type="entry name" value="Pep_chain_release_fac_I_sf"/>
</dbReference>
<dbReference type="InterPro" id="IPR050057">
    <property type="entry name" value="Prokaryotic/Mito_RF"/>
</dbReference>
<dbReference type="InterPro" id="IPR004373">
    <property type="entry name" value="RF-1"/>
</dbReference>
<dbReference type="NCBIfam" id="TIGR00019">
    <property type="entry name" value="prfA"/>
    <property type="match status" value="1"/>
</dbReference>
<dbReference type="NCBIfam" id="NF001859">
    <property type="entry name" value="PRK00591.1"/>
    <property type="match status" value="1"/>
</dbReference>
<dbReference type="PANTHER" id="PTHR43804">
    <property type="entry name" value="LD18447P"/>
    <property type="match status" value="1"/>
</dbReference>
<dbReference type="PANTHER" id="PTHR43804:SF7">
    <property type="entry name" value="LD18447P"/>
    <property type="match status" value="1"/>
</dbReference>
<dbReference type="Pfam" id="PF03462">
    <property type="entry name" value="PCRF"/>
    <property type="match status" value="1"/>
</dbReference>
<dbReference type="Pfam" id="PF00472">
    <property type="entry name" value="RF-1"/>
    <property type="match status" value="1"/>
</dbReference>
<dbReference type="SMART" id="SM00937">
    <property type="entry name" value="PCRF"/>
    <property type="match status" value="1"/>
</dbReference>
<dbReference type="SUPFAM" id="SSF75620">
    <property type="entry name" value="Release factor"/>
    <property type="match status" value="1"/>
</dbReference>
<dbReference type="PROSITE" id="PS00745">
    <property type="entry name" value="RF_PROK_I"/>
    <property type="match status" value="1"/>
</dbReference>
<feature type="chain" id="PRO_0000177773" description="Peptide chain release factor 1">
    <location>
        <begin position="1"/>
        <end position="361"/>
    </location>
</feature>
<feature type="modified residue" description="N5-methylglutamine" evidence="1">
    <location>
        <position position="235"/>
    </location>
</feature>
<proteinExistence type="inferred from homology"/>
<name>RF1_XANCP</name>
<gene>
    <name evidence="1" type="primary">prfA</name>
    <name type="ordered locus">XCC0867</name>
</gene>
<accession>Q8PC68</accession>
<reference key="1">
    <citation type="journal article" date="2002" name="Nature">
        <title>Comparison of the genomes of two Xanthomonas pathogens with differing host specificities.</title>
        <authorList>
            <person name="da Silva A.C.R."/>
            <person name="Ferro J.A."/>
            <person name="Reinach F.C."/>
            <person name="Farah C.S."/>
            <person name="Furlan L.R."/>
            <person name="Quaggio R.B."/>
            <person name="Monteiro-Vitorello C.B."/>
            <person name="Van Sluys M.A."/>
            <person name="Almeida N.F. Jr."/>
            <person name="Alves L.M.C."/>
            <person name="do Amaral A.M."/>
            <person name="Bertolini M.C."/>
            <person name="Camargo L.E.A."/>
            <person name="Camarotte G."/>
            <person name="Cannavan F."/>
            <person name="Cardozo J."/>
            <person name="Chambergo F."/>
            <person name="Ciapina L.P."/>
            <person name="Cicarelli R.M.B."/>
            <person name="Coutinho L.L."/>
            <person name="Cursino-Santos J.R."/>
            <person name="El-Dorry H."/>
            <person name="Faria J.B."/>
            <person name="Ferreira A.J.S."/>
            <person name="Ferreira R.C.C."/>
            <person name="Ferro M.I.T."/>
            <person name="Formighieri E.F."/>
            <person name="Franco M.C."/>
            <person name="Greggio C.C."/>
            <person name="Gruber A."/>
            <person name="Katsuyama A.M."/>
            <person name="Kishi L.T."/>
            <person name="Leite R.P."/>
            <person name="Lemos E.G.M."/>
            <person name="Lemos M.V.F."/>
            <person name="Locali E.C."/>
            <person name="Machado M.A."/>
            <person name="Madeira A.M.B.N."/>
            <person name="Martinez-Rossi N.M."/>
            <person name="Martins E.C."/>
            <person name="Meidanis J."/>
            <person name="Menck C.F.M."/>
            <person name="Miyaki C.Y."/>
            <person name="Moon D.H."/>
            <person name="Moreira L.M."/>
            <person name="Novo M.T.M."/>
            <person name="Okura V.K."/>
            <person name="Oliveira M.C."/>
            <person name="Oliveira V.R."/>
            <person name="Pereira H.A."/>
            <person name="Rossi A."/>
            <person name="Sena J.A.D."/>
            <person name="Silva C."/>
            <person name="de Souza R.F."/>
            <person name="Spinola L.A.F."/>
            <person name="Takita M.A."/>
            <person name="Tamura R.E."/>
            <person name="Teixeira E.C."/>
            <person name="Tezza R.I.D."/>
            <person name="Trindade dos Santos M."/>
            <person name="Truffi D."/>
            <person name="Tsai S.M."/>
            <person name="White F.F."/>
            <person name="Setubal J.C."/>
            <person name="Kitajima J.P."/>
        </authorList>
    </citation>
    <scope>NUCLEOTIDE SEQUENCE [LARGE SCALE GENOMIC DNA]</scope>
    <source>
        <strain>ATCC 33913 / DSM 3586 / NCPPB 528 / LMG 568 / P 25</strain>
    </source>
</reference>
<organism>
    <name type="scientific">Xanthomonas campestris pv. campestris (strain ATCC 33913 / DSM 3586 / NCPPB 528 / LMG 568 / P 25)</name>
    <dbReference type="NCBI Taxonomy" id="190485"/>
    <lineage>
        <taxon>Bacteria</taxon>
        <taxon>Pseudomonadati</taxon>
        <taxon>Pseudomonadota</taxon>
        <taxon>Gammaproteobacteria</taxon>
        <taxon>Lysobacterales</taxon>
        <taxon>Lysobacteraceae</taxon>
        <taxon>Xanthomonas</taxon>
    </lineage>
</organism>
<comment type="function">
    <text evidence="1">Peptide chain release factor 1 directs the termination of translation in response to the peptide chain termination codons UAG and UAA.</text>
</comment>
<comment type="subcellular location">
    <subcellularLocation>
        <location evidence="1">Cytoplasm</location>
    </subcellularLocation>
</comment>
<comment type="PTM">
    <text evidence="1">Methylated by PrmC. Methylation increases the termination efficiency of RF1.</text>
</comment>
<comment type="similarity">
    <text evidence="1">Belongs to the prokaryotic/mitochondrial release factor family.</text>
</comment>
<keyword id="KW-0963">Cytoplasm</keyword>
<keyword id="KW-0488">Methylation</keyword>
<keyword id="KW-0648">Protein biosynthesis</keyword>
<keyword id="KW-1185">Reference proteome</keyword>
<sequence>MTPTLRRKLEALAERREELQHLLSDPEVVSNNDKFRSLSRELSQLEPVALAMQEEARAKADLSAAEAMRNDPEMRELAEEEILAAQARLDELDAQLALLLVPRDPRDEGNLFLEVRAGTGGDEAAIFAGDLFRMYARYAERQGWKVEIESDSPGEHGGYKEVVARVVGRGAYSRLKFESGTHRVQRVPATESQGRIHTSAATVAIIPEADDVEEIVINPADLKVDTFRSSGAGGQHVNKTESAIRITHVPSGVVVECQTERSQHANRDKAMKRLKAQLVEAERSKAAAAEAQTRKLQVGSGDRSQRIRTYSFPQGRITDHRVEGLTLYDLPNIIEGDLDALIARLLHEHQADELARLSEGT</sequence>